<reference key="1">
    <citation type="journal article" date="1989" name="Biochem. J.">
        <title>Primary structure of a dimeric haemoglobin from the deep-sea cold-seep clam Calyptogena soyoae.</title>
        <authorList>
            <person name="Suzuki T."/>
            <person name="Takagi T."/>
            <person name="Ohta S."/>
        </authorList>
    </citation>
    <scope>PROTEIN SEQUENCE</scope>
</reference>
<comment type="subunit">
    <text>Homodimer.</text>
</comment>
<comment type="similarity">
    <text evidence="1">Belongs to the globin family.</text>
</comment>
<accession>P14528</accession>
<feature type="chain" id="PRO_0000052491" description="Globin-2">
    <location>
        <begin position="1"/>
        <end position="136"/>
    </location>
</feature>
<feature type="domain" description="Globin" evidence="1">
    <location>
        <begin position="1"/>
        <end position="134"/>
    </location>
</feature>
<feature type="binding site" description="proximal binding residue" evidence="1">
    <location>
        <position position="89"/>
    </location>
    <ligand>
        <name>heme b</name>
        <dbReference type="ChEBI" id="CHEBI:60344"/>
    </ligand>
    <ligandPart>
        <name>Fe</name>
        <dbReference type="ChEBI" id="CHEBI:18248"/>
    </ligandPart>
</feature>
<keyword id="KW-0903">Direct protein sequencing</keyword>
<keyword id="KW-0349">Heme</keyword>
<keyword id="KW-0408">Iron</keyword>
<keyword id="KW-0479">Metal-binding</keyword>
<keyword id="KW-0561">Oxygen transport</keyword>
<keyword id="KW-0813">Transport</keyword>
<name>GLB2_PHRSO</name>
<proteinExistence type="evidence at protein level"/>
<dbReference type="PIR" id="S04226">
    <property type="entry name" value="S04226"/>
</dbReference>
<dbReference type="SMR" id="P14528"/>
<dbReference type="GO" id="GO:0020037">
    <property type="term" value="F:heme binding"/>
    <property type="evidence" value="ECO:0007669"/>
    <property type="project" value="InterPro"/>
</dbReference>
<dbReference type="GO" id="GO:0046872">
    <property type="term" value="F:metal ion binding"/>
    <property type="evidence" value="ECO:0007669"/>
    <property type="project" value="UniProtKB-KW"/>
</dbReference>
<dbReference type="GO" id="GO:0019825">
    <property type="term" value="F:oxygen binding"/>
    <property type="evidence" value="ECO:0007669"/>
    <property type="project" value="InterPro"/>
</dbReference>
<dbReference type="GO" id="GO:0005344">
    <property type="term" value="F:oxygen carrier activity"/>
    <property type="evidence" value="ECO:0007669"/>
    <property type="project" value="UniProtKB-KW"/>
</dbReference>
<dbReference type="CDD" id="cd01040">
    <property type="entry name" value="Mb-like"/>
    <property type="match status" value="1"/>
</dbReference>
<dbReference type="Gene3D" id="1.10.490.10">
    <property type="entry name" value="Globins"/>
    <property type="match status" value="1"/>
</dbReference>
<dbReference type="InterPro" id="IPR000971">
    <property type="entry name" value="Globin"/>
</dbReference>
<dbReference type="InterPro" id="IPR009050">
    <property type="entry name" value="Globin-like_sf"/>
</dbReference>
<dbReference type="InterPro" id="IPR012292">
    <property type="entry name" value="Globin/Proto"/>
</dbReference>
<dbReference type="InterPro" id="IPR044399">
    <property type="entry name" value="Mb-like_M"/>
</dbReference>
<dbReference type="Pfam" id="PF00042">
    <property type="entry name" value="Globin"/>
    <property type="match status" value="1"/>
</dbReference>
<dbReference type="SUPFAM" id="SSF46458">
    <property type="entry name" value="Globin-like"/>
    <property type="match status" value="1"/>
</dbReference>
<dbReference type="PROSITE" id="PS01033">
    <property type="entry name" value="GLOBIN"/>
    <property type="match status" value="1"/>
</dbReference>
<evidence type="ECO:0000255" key="1">
    <source>
        <dbReference type="PROSITE-ProRule" id="PRU00238"/>
    </source>
</evidence>
<protein>
    <recommendedName>
        <fullName>Globin-2</fullName>
    </recommendedName>
    <alternativeName>
        <fullName>Globin II</fullName>
    </alternativeName>
    <alternativeName>
        <fullName>Hb II</fullName>
    </alternativeName>
</protein>
<organism>
    <name type="scientific">Phreagena soyoae</name>
    <name type="common">Deep-sea cold-seep clam</name>
    <name type="synonym">Calyptogena soyoae</name>
    <dbReference type="NCBI Taxonomy" id="1298647"/>
    <lineage>
        <taxon>Eukaryota</taxon>
        <taxon>Metazoa</taxon>
        <taxon>Spiralia</taxon>
        <taxon>Lophotrochozoa</taxon>
        <taxon>Mollusca</taxon>
        <taxon>Bivalvia</taxon>
        <taxon>Autobranchia</taxon>
        <taxon>Heteroconchia</taxon>
        <taxon>Euheterodonta</taxon>
        <taxon>Imparidentia</taxon>
        <taxon>Neoheterodontei</taxon>
        <taxon>Venerida</taxon>
        <taxon>Glossoidea</taxon>
        <taxon>Vesicomyidae</taxon>
        <taxon>Phreagena</taxon>
    </lineage>
</organism>
<sequence>VSQADIAAVQTSWRRCYCSWDNEDGLKFYQTLFDSNSKIRHAFESAGATNDTEMEKQANLFGLMMTQFIDNLDDTTALNYKISGLMATHKTRNVVDPALFAIALNELVKFIGNQQPAWKNVTAVILSQMKIALSSN</sequence>